<reference key="1">
    <citation type="journal article" date="1999" name="Mol. Biol. Cell">
        <title>A mutant of arp2p causes partial disassembly of the Arp2/3 complex and loss of cortical actin function in fission yeast.</title>
        <authorList>
            <person name="Morrell J.L."/>
            <person name="Morphew M."/>
            <person name="Gould K.L."/>
        </authorList>
    </citation>
    <scope>NUCLEOTIDE SEQUENCE [GENOMIC DNA]</scope>
    <scope>FUNCTION</scope>
    <scope>SUBCELLULAR LOCATION</scope>
    <scope>IDENTIFICATION IN THE ARP2/3 COMPLEX</scope>
    <source>
        <strain>972 / ATCC 24843</strain>
    </source>
</reference>
<reference key="2">
    <citation type="journal article" date="2002" name="Nature">
        <title>The genome sequence of Schizosaccharomyces pombe.</title>
        <authorList>
            <person name="Wood V."/>
            <person name="Gwilliam R."/>
            <person name="Rajandream M.A."/>
            <person name="Lyne M.H."/>
            <person name="Lyne R."/>
            <person name="Stewart A."/>
            <person name="Sgouros J.G."/>
            <person name="Peat N."/>
            <person name="Hayles J."/>
            <person name="Baker S.G."/>
            <person name="Basham D."/>
            <person name="Bowman S."/>
            <person name="Brooks K."/>
            <person name="Brown D."/>
            <person name="Brown S."/>
            <person name="Chillingworth T."/>
            <person name="Churcher C.M."/>
            <person name="Collins M."/>
            <person name="Connor R."/>
            <person name="Cronin A."/>
            <person name="Davis P."/>
            <person name="Feltwell T."/>
            <person name="Fraser A."/>
            <person name="Gentles S."/>
            <person name="Goble A."/>
            <person name="Hamlin N."/>
            <person name="Harris D.E."/>
            <person name="Hidalgo J."/>
            <person name="Hodgson G."/>
            <person name="Holroyd S."/>
            <person name="Hornsby T."/>
            <person name="Howarth S."/>
            <person name="Huckle E.J."/>
            <person name="Hunt S."/>
            <person name="Jagels K."/>
            <person name="James K.D."/>
            <person name="Jones L."/>
            <person name="Jones M."/>
            <person name="Leather S."/>
            <person name="McDonald S."/>
            <person name="McLean J."/>
            <person name="Mooney P."/>
            <person name="Moule S."/>
            <person name="Mungall K.L."/>
            <person name="Murphy L.D."/>
            <person name="Niblett D."/>
            <person name="Odell C."/>
            <person name="Oliver K."/>
            <person name="O'Neil S."/>
            <person name="Pearson D."/>
            <person name="Quail M.A."/>
            <person name="Rabbinowitsch E."/>
            <person name="Rutherford K.M."/>
            <person name="Rutter S."/>
            <person name="Saunders D."/>
            <person name="Seeger K."/>
            <person name="Sharp S."/>
            <person name="Skelton J."/>
            <person name="Simmonds M.N."/>
            <person name="Squares R."/>
            <person name="Squares S."/>
            <person name="Stevens K."/>
            <person name="Taylor K."/>
            <person name="Taylor R.G."/>
            <person name="Tivey A."/>
            <person name="Walsh S.V."/>
            <person name="Warren T."/>
            <person name="Whitehead S."/>
            <person name="Woodward J.R."/>
            <person name="Volckaert G."/>
            <person name="Aert R."/>
            <person name="Robben J."/>
            <person name="Grymonprez B."/>
            <person name="Weltjens I."/>
            <person name="Vanstreels E."/>
            <person name="Rieger M."/>
            <person name="Schaefer M."/>
            <person name="Mueller-Auer S."/>
            <person name="Gabel C."/>
            <person name="Fuchs M."/>
            <person name="Duesterhoeft A."/>
            <person name="Fritzc C."/>
            <person name="Holzer E."/>
            <person name="Moestl D."/>
            <person name="Hilbert H."/>
            <person name="Borzym K."/>
            <person name="Langer I."/>
            <person name="Beck A."/>
            <person name="Lehrach H."/>
            <person name="Reinhardt R."/>
            <person name="Pohl T.M."/>
            <person name="Eger P."/>
            <person name="Zimmermann W."/>
            <person name="Wedler H."/>
            <person name="Wambutt R."/>
            <person name="Purnelle B."/>
            <person name="Goffeau A."/>
            <person name="Cadieu E."/>
            <person name="Dreano S."/>
            <person name="Gloux S."/>
            <person name="Lelaure V."/>
            <person name="Mottier S."/>
            <person name="Galibert F."/>
            <person name="Aves S.J."/>
            <person name="Xiang Z."/>
            <person name="Hunt C."/>
            <person name="Moore K."/>
            <person name="Hurst S.M."/>
            <person name="Lucas M."/>
            <person name="Rochet M."/>
            <person name="Gaillardin C."/>
            <person name="Tallada V.A."/>
            <person name="Garzon A."/>
            <person name="Thode G."/>
            <person name="Daga R.R."/>
            <person name="Cruzado L."/>
            <person name="Jimenez J."/>
            <person name="Sanchez M."/>
            <person name="del Rey F."/>
            <person name="Benito J."/>
            <person name="Dominguez A."/>
            <person name="Revuelta J.L."/>
            <person name="Moreno S."/>
            <person name="Armstrong J."/>
            <person name="Forsburg S.L."/>
            <person name="Cerutti L."/>
            <person name="Lowe T."/>
            <person name="McCombie W.R."/>
            <person name="Paulsen I."/>
            <person name="Potashkin J."/>
            <person name="Shpakovski G.V."/>
            <person name="Ussery D."/>
            <person name="Barrell B.G."/>
            <person name="Nurse P."/>
        </authorList>
    </citation>
    <scope>NUCLEOTIDE SEQUENCE [LARGE SCALE GENOMIC DNA]</scope>
    <source>
        <strain>972 / ATCC 24843</strain>
    </source>
</reference>
<evidence type="ECO:0000250" key="1"/>
<evidence type="ECO:0000269" key="2">
    <source>
    </source>
</evidence>
<evidence type="ECO:0000305" key="3"/>
<evidence type="ECO:0007829" key="4">
    <source>
        <dbReference type="PDB" id="8UXW"/>
    </source>
</evidence>
<sequence>MESAPIVLDNGTGFVKVGYAKDNFPRFQFPSIVGRPILRAEEKTGNVQIKDVMVGDEAEAVRSLLQVKYPMENGIIRDFEEMNQLWDYTFFEKLKIDPRGRKILLTEPPMNPVANREKMCETMFERYGFGGVYVAIQAVLSLYAQGLSSGVVVDSGDGVTHIVPVYESVVLNHLVGRLDVAGRDATRYLISLLLRKGYAFNRTADFETVREMKEKLCYVSYDLELDHKLSEETTVLMRNYTLPDGRVIKVGSERYECPECLFQPHLVGSEQPGLSEFIFDTIQAADVDIRKYLYRAIVLSGGSSMYAGLPSRLEKEIKQLWFERVLHGDPARLPNFKVKIEDAPRRRHAVFIGGAVLADIMAQNDHMWVSKAEWEEYGVRALDKLGPRTT</sequence>
<name>ARP2_SCHPO</name>
<accession>Q9UUJ1</accession>
<accession>Q9US62</accession>
<accession>Q9UTP2</accession>
<proteinExistence type="evidence at protein level"/>
<comment type="function">
    <text evidence="1 2">Functions as ATP-binding component of the Arp2/3 complex which is involved in regulation of actin polymerization and together with an activating nucleation-promoting factor (NPF) mediates the formation of branched actin networks. Seems to contact the pointed end of the daughter actin filament (By similarity). During cytokinesis it colocalizes to the cortical actin patches until spetation is complete. Has a role in the mobility of these patches. Essential for viability.</text>
</comment>
<comment type="subunit">
    <text evidence="2">Component of the Arp2/3 complex composed of arp2, act2, arc1/p41-ARC, arc2/p34-ARC, arc3/p21-ARC, arc4/p20-ARC and arc5/p16-ARC.</text>
</comment>
<comment type="subcellular location">
    <subcellularLocation>
        <location evidence="2">Cytoplasm</location>
        <location evidence="2">Cytoskeleton</location>
        <location evidence="2">Actin patch</location>
    </subcellularLocation>
</comment>
<comment type="similarity">
    <text evidence="3">Belongs to the actin family. ARP2 subfamily.</text>
</comment>
<feature type="chain" id="PRO_0000089076" description="Actin-related protein 2">
    <location>
        <begin position="1"/>
        <end position="390"/>
    </location>
</feature>
<feature type="binding site" evidence="1">
    <location>
        <begin position="156"/>
        <end position="158"/>
    </location>
    <ligand>
        <name>ATP</name>
        <dbReference type="ChEBI" id="CHEBI:30616"/>
    </ligand>
</feature>
<feature type="binding site" evidence="1">
    <location>
        <begin position="210"/>
        <end position="214"/>
    </location>
    <ligand>
        <name>ATP</name>
        <dbReference type="ChEBI" id="CHEBI:30616"/>
    </ligand>
</feature>
<feature type="binding site" evidence="1">
    <location>
        <begin position="301"/>
        <end position="306"/>
    </location>
    <ligand>
        <name>ATP</name>
        <dbReference type="ChEBI" id="CHEBI:30616"/>
    </ligand>
</feature>
<feature type="sequence conflict" description="In Ref. 1; AAF21808." evidence="3" ref="1">
    <original>A</original>
    <variation>V</variation>
    <location>
        <position position="358"/>
    </location>
</feature>
<feature type="strand" evidence="4">
    <location>
        <begin position="6"/>
        <end position="10"/>
    </location>
</feature>
<feature type="strand" evidence="4">
    <location>
        <begin position="12"/>
        <end position="19"/>
    </location>
</feature>
<feature type="strand" evidence="4">
    <location>
        <begin position="26"/>
        <end position="30"/>
    </location>
</feature>
<feature type="strand" evidence="4">
    <location>
        <begin position="33"/>
        <end position="38"/>
    </location>
</feature>
<feature type="strand" evidence="4">
    <location>
        <begin position="51"/>
        <end position="54"/>
    </location>
</feature>
<feature type="helix" evidence="4">
    <location>
        <begin position="55"/>
        <end position="59"/>
    </location>
</feature>
<feature type="helix" evidence="4">
    <location>
        <begin position="60"/>
        <end position="64"/>
    </location>
</feature>
<feature type="strand" evidence="4">
    <location>
        <begin position="65"/>
        <end position="68"/>
    </location>
</feature>
<feature type="strand" evidence="4">
    <location>
        <begin position="70"/>
        <end position="72"/>
    </location>
</feature>
<feature type="strand" evidence="4">
    <location>
        <begin position="75"/>
        <end position="77"/>
    </location>
</feature>
<feature type="helix" evidence="4">
    <location>
        <begin position="79"/>
        <end position="91"/>
    </location>
</feature>
<feature type="turn" evidence="4">
    <location>
        <begin position="92"/>
        <end position="94"/>
    </location>
</feature>
<feature type="strand" evidence="4">
    <location>
        <begin position="102"/>
        <end position="107"/>
    </location>
</feature>
<feature type="helix" evidence="4">
    <location>
        <begin position="113"/>
        <end position="125"/>
    </location>
</feature>
<feature type="strand" evidence="4">
    <location>
        <begin position="130"/>
        <end position="136"/>
    </location>
</feature>
<feature type="helix" evidence="4">
    <location>
        <begin position="137"/>
        <end position="144"/>
    </location>
</feature>
<feature type="strand" evidence="4">
    <location>
        <begin position="148"/>
        <end position="155"/>
    </location>
</feature>
<feature type="strand" evidence="4">
    <location>
        <begin position="160"/>
        <end position="166"/>
    </location>
</feature>
<feature type="turn" evidence="4">
    <location>
        <begin position="172"/>
        <end position="174"/>
    </location>
</feature>
<feature type="strand" evidence="4">
    <location>
        <begin position="176"/>
        <end position="179"/>
    </location>
</feature>
<feature type="helix" evidence="4">
    <location>
        <begin position="182"/>
        <end position="195"/>
    </location>
</feature>
<feature type="helix" evidence="4">
    <location>
        <begin position="203"/>
        <end position="205"/>
    </location>
</feature>
<feature type="helix" evidence="4">
    <location>
        <begin position="206"/>
        <end position="216"/>
    </location>
</feature>
<feature type="helix" evidence="4">
    <location>
        <begin position="223"/>
        <end position="231"/>
    </location>
</feature>
<feature type="strand" evidence="4">
    <location>
        <begin position="238"/>
        <end position="241"/>
    </location>
</feature>
<feature type="strand" evidence="4">
    <location>
        <begin position="247"/>
        <end position="251"/>
    </location>
</feature>
<feature type="helix" evidence="4">
    <location>
        <begin position="253"/>
        <end position="256"/>
    </location>
</feature>
<feature type="helix" evidence="4">
    <location>
        <begin position="259"/>
        <end position="262"/>
    </location>
</feature>
<feature type="helix" evidence="4">
    <location>
        <begin position="264"/>
        <end position="267"/>
    </location>
</feature>
<feature type="helix" evidence="4">
    <location>
        <begin position="274"/>
        <end position="282"/>
    </location>
</feature>
<feature type="turn" evidence="4">
    <location>
        <begin position="287"/>
        <end position="289"/>
    </location>
</feature>
<feature type="helix" evidence="4">
    <location>
        <begin position="290"/>
        <end position="294"/>
    </location>
</feature>
<feature type="strand" evidence="4">
    <location>
        <begin position="297"/>
        <end position="301"/>
    </location>
</feature>
<feature type="helix" evidence="4">
    <location>
        <begin position="302"/>
        <end position="304"/>
    </location>
</feature>
<feature type="helix" evidence="4">
    <location>
        <begin position="309"/>
        <end position="324"/>
    </location>
</feature>
<feature type="helix" evidence="4">
    <location>
        <begin position="330"/>
        <end position="335"/>
    </location>
</feature>
<feature type="helix" evidence="4">
    <location>
        <begin position="346"/>
        <end position="348"/>
    </location>
</feature>
<feature type="helix" evidence="4">
    <location>
        <begin position="349"/>
        <end position="360"/>
    </location>
</feature>
<feature type="helix" evidence="4">
    <location>
        <begin position="365"/>
        <end position="367"/>
    </location>
</feature>
<feature type="strand" evidence="4">
    <location>
        <begin position="368"/>
        <end position="370"/>
    </location>
</feature>
<feature type="helix" evidence="4">
    <location>
        <begin position="371"/>
        <end position="377"/>
    </location>
</feature>
<feature type="helix" evidence="4">
    <location>
        <begin position="378"/>
        <end position="384"/>
    </location>
</feature>
<protein>
    <recommendedName>
        <fullName>Actin-related protein 2</fullName>
    </recommendedName>
    <alternativeName>
        <fullName>Actin-like protein 2</fullName>
    </alternativeName>
</protein>
<dbReference type="EMBL" id="AF095900">
    <property type="protein sequence ID" value="AAF21808.1"/>
    <property type="molecule type" value="Genomic_DNA"/>
</dbReference>
<dbReference type="EMBL" id="CU329670">
    <property type="protein sequence ID" value="CAB59802.2"/>
    <property type="molecule type" value="Genomic_DNA"/>
</dbReference>
<dbReference type="PIR" id="T38191">
    <property type="entry name" value="T38191"/>
</dbReference>
<dbReference type="RefSeq" id="XP_001713111.1">
    <property type="nucleotide sequence ID" value="XM_001713059.2"/>
</dbReference>
<dbReference type="PDB" id="6W17">
    <property type="method" value="EM"/>
    <property type="resolution" value="3.90 A"/>
    <property type="chains" value="B=1-390"/>
</dbReference>
<dbReference type="PDB" id="6W18">
    <property type="method" value="EM"/>
    <property type="resolution" value="4.20 A"/>
    <property type="chains" value="B=1-390"/>
</dbReference>
<dbReference type="PDB" id="8E9B">
    <property type="method" value="EM"/>
    <property type="resolution" value="3.50 A"/>
    <property type="chains" value="B=1-390"/>
</dbReference>
<dbReference type="PDB" id="8UXW">
    <property type="method" value="EM"/>
    <property type="resolution" value="2.70 A"/>
    <property type="chains" value="B=1-390"/>
</dbReference>
<dbReference type="PDB" id="8UXX">
    <property type="method" value="EM"/>
    <property type="resolution" value="3.20 A"/>
    <property type="chains" value="B=1-390"/>
</dbReference>
<dbReference type="PDBsum" id="6W17"/>
<dbReference type="PDBsum" id="6W18"/>
<dbReference type="PDBsum" id="8E9B"/>
<dbReference type="PDBsum" id="8UXW"/>
<dbReference type="PDBsum" id="8UXX"/>
<dbReference type="EMDB" id="EMD-21503"/>
<dbReference type="EMDB" id="EMD-42787"/>
<dbReference type="EMDB" id="EMD-42788"/>
<dbReference type="SMR" id="Q9UUJ1"/>
<dbReference type="BioGRID" id="858103">
    <property type="interactions" value="20"/>
</dbReference>
<dbReference type="ComplexPortal" id="CPX-2474">
    <property type="entry name" value="Actin-related protein 2/3 complex"/>
</dbReference>
<dbReference type="FunCoup" id="Q9UUJ1">
    <property type="interactions" value="373"/>
</dbReference>
<dbReference type="IntAct" id="Q9UUJ1">
    <property type="interactions" value="9"/>
</dbReference>
<dbReference type="STRING" id="284812.Q9UUJ1"/>
<dbReference type="iPTMnet" id="Q9UUJ1"/>
<dbReference type="PaxDb" id="4896-SPAC11H11.06.1"/>
<dbReference type="EnsemblFungi" id="SPAC11H11.06.1">
    <property type="protein sequence ID" value="SPAC11H11.06.1:pep"/>
    <property type="gene ID" value="SPAC11H11.06"/>
</dbReference>
<dbReference type="PomBase" id="SPAC11H11.06">
    <property type="gene designation" value="arp2"/>
</dbReference>
<dbReference type="VEuPathDB" id="FungiDB:SPAC11H11.06"/>
<dbReference type="eggNOG" id="KOG0677">
    <property type="taxonomic scope" value="Eukaryota"/>
</dbReference>
<dbReference type="HOGENOM" id="CLU_027965_0_2_1"/>
<dbReference type="InParanoid" id="Q9UUJ1"/>
<dbReference type="OMA" id="WEDMQHL"/>
<dbReference type="PhylomeDB" id="Q9UUJ1"/>
<dbReference type="Reactome" id="R-SPO-2029482">
    <property type="pathway name" value="Regulation of actin dynamics for phagocytic cup formation"/>
</dbReference>
<dbReference type="Reactome" id="R-SPO-5663213">
    <property type="pathway name" value="RHO GTPases Activate WASPs and WAVEs"/>
</dbReference>
<dbReference type="Reactome" id="R-SPO-6798695">
    <property type="pathway name" value="Neutrophil degranulation"/>
</dbReference>
<dbReference type="Reactome" id="R-SPO-8856828">
    <property type="pathway name" value="Clathrin-mediated endocytosis"/>
</dbReference>
<dbReference type="PRO" id="PR:Q9UUJ1"/>
<dbReference type="Proteomes" id="UP000002485">
    <property type="component" value="Chromosome I"/>
</dbReference>
<dbReference type="GO" id="GO:0030479">
    <property type="term" value="C:actin cortical patch"/>
    <property type="evidence" value="ECO:0000314"/>
    <property type="project" value="PomBase"/>
</dbReference>
<dbReference type="GO" id="GO:0005885">
    <property type="term" value="C:Arp2/3 protein complex"/>
    <property type="evidence" value="ECO:0000314"/>
    <property type="project" value="PomBase"/>
</dbReference>
<dbReference type="GO" id="GO:0005938">
    <property type="term" value="C:cell cortex"/>
    <property type="evidence" value="ECO:0000318"/>
    <property type="project" value="GO_Central"/>
</dbReference>
<dbReference type="GO" id="GO:0051285">
    <property type="term" value="C:cell cortex of cell tip"/>
    <property type="evidence" value="ECO:0000314"/>
    <property type="project" value="PomBase"/>
</dbReference>
<dbReference type="GO" id="GO:0031097">
    <property type="term" value="C:medial cortex"/>
    <property type="evidence" value="ECO:0000314"/>
    <property type="project" value="PomBase"/>
</dbReference>
<dbReference type="GO" id="GO:0051015">
    <property type="term" value="F:actin filament binding"/>
    <property type="evidence" value="ECO:0000314"/>
    <property type="project" value="PomBase"/>
</dbReference>
<dbReference type="GO" id="GO:0005524">
    <property type="term" value="F:ATP binding"/>
    <property type="evidence" value="ECO:0000314"/>
    <property type="project" value="PomBase"/>
</dbReference>
<dbReference type="GO" id="GO:0000147">
    <property type="term" value="P:actin cortical patch assembly"/>
    <property type="evidence" value="ECO:0000305"/>
    <property type="project" value="PomBase"/>
</dbReference>
<dbReference type="GO" id="GO:0090135">
    <property type="term" value="P:actin filament branching"/>
    <property type="evidence" value="ECO:0000269"/>
    <property type="project" value="PomBase"/>
</dbReference>
<dbReference type="GO" id="GO:0034314">
    <property type="term" value="P:Arp2/3 complex-mediated actin nucleation"/>
    <property type="evidence" value="ECO:0000314"/>
    <property type="project" value="PomBase"/>
</dbReference>
<dbReference type="GO" id="GO:0006897">
    <property type="term" value="P:endocytosis"/>
    <property type="evidence" value="ECO:0000315"/>
    <property type="project" value="PomBase"/>
</dbReference>
<dbReference type="CDD" id="cd10220">
    <property type="entry name" value="ASKHA_NBD_Arp2"/>
    <property type="match status" value="1"/>
</dbReference>
<dbReference type="FunFam" id="3.30.420.40:FF:000148">
    <property type="entry name" value="Actin, alpha skeletal muscle"/>
    <property type="match status" value="1"/>
</dbReference>
<dbReference type="FunFam" id="3.90.640.10:FF:000005">
    <property type="entry name" value="Actin-related protein 2"/>
    <property type="match status" value="1"/>
</dbReference>
<dbReference type="Gene3D" id="3.30.420.40">
    <property type="match status" value="2"/>
</dbReference>
<dbReference type="Gene3D" id="3.90.640.10">
    <property type="entry name" value="Actin, Chain A, domain 4"/>
    <property type="match status" value="1"/>
</dbReference>
<dbReference type="InterPro" id="IPR004000">
    <property type="entry name" value="Actin"/>
</dbReference>
<dbReference type="InterPro" id="IPR020902">
    <property type="entry name" value="Actin/actin-like_CS"/>
</dbReference>
<dbReference type="InterPro" id="IPR043129">
    <property type="entry name" value="ATPase_NBD"/>
</dbReference>
<dbReference type="PANTHER" id="PTHR11937">
    <property type="entry name" value="ACTIN"/>
    <property type="match status" value="1"/>
</dbReference>
<dbReference type="Pfam" id="PF00022">
    <property type="entry name" value="Actin"/>
    <property type="match status" value="1"/>
</dbReference>
<dbReference type="PRINTS" id="PR00190">
    <property type="entry name" value="ACTIN"/>
</dbReference>
<dbReference type="SMART" id="SM00268">
    <property type="entry name" value="ACTIN"/>
    <property type="match status" value="1"/>
</dbReference>
<dbReference type="SUPFAM" id="SSF53067">
    <property type="entry name" value="Actin-like ATPase domain"/>
    <property type="match status" value="2"/>
</dbReference>
<dbReference type="PROSITE" id="PS01132">
    <property type="entry name" value="ACTINS_ACT_LIKE"/>
    <property type="match status" value="1"/>
</dbReference>
<organism>
    <name type="scientific">Schizosaccharomyces pombe (strain 972 / ATCC 24843)</name>
    <name type="common">Fission yeast</name>
    <dbReference type="NCBI Taxonomy" id="284812"/>
    <lineage>
        <taxon>Eukaryota</taxon>
        <taxon>Fungi</taxon>
        <taxon>Dikarya</taxon>
        <taxon>Ascomycota</taxon>
        <taxon>Taphrinomycotina</taxon>
        <taxon>Schizosaccharomycetes</taxon>
        <taxon>Schizosaccharomycetales</taxon>
        <taxon>Schizosaccharomycetaceae</taxon>
        <taxon>Schizosaccharomyces</taxon>
    </lineage>
</organism>
<keyword id="KW-0002">3D-structure</keyword>
<keyword id="KW-0009">Actin-binding</keyword>
<keyword id="KW-0067">ATP-binding</keyword>
<keyword id="KW-0963">Cytoplasm</keyword>
<keyword id="KW-0206">Cytoskeleton</keyword>
<keyword id="KW-0547">Nucleotide-binding</keyword>
<keyword id="KW-1185">Reference proteome</keyword>
<gene>
    <name type="primary">arp2</name>
    <name type="ORF">SPAC11H11.06</name>
    <name type="ORF">SPAC22F8.01</name>
</gene>